<feature type="chain" id="PRO_0000321006" description="Protein translocase subunit SecA 1">
    <location>
        <begin position="1"/>
        <end position="901"/>
    </location>
</feature>
<feature type="region of interest" description="Disordered" evidence="2">
    <location>
        <begin position="856"/>
        <end position="875"/>
    </location>
</feature>
<feature type="binding site" evidence="1">
    <location>
        <position position="89"/>
    </location>
    <ligand>
        <name>ATP</name>
        <dbReference type="ChEBI" id="CHEBI:30616"/>
    </ligand>
</feature>
<feature type="binding site" evidence="1">
    <location>
        <begin position="107"/>
        <end position="111"/>
    </location>
    <ligand>
        <name>ATP</name>
        <dbReference type="ChEBI" id="CHEBI:30616"/>
    </ligand>
</feature>
<feature type="binding site" evidence="1">
    <location>
        <position position="502"/>
    </location>
    <ligand>
        <name>ATP</name>
        <dbReference type="ChEBI" id="CHEBI:30616"/>
    </ligand>
</feature>
<feature type="binding site" evidence="1">
    <location>
        <position position="885"/>
    </location>
    <ligand>
        <name>Zn(2+)</name>
        <dbReference type="ChEBI" id="CHEBI:29105"/>
    </ligand>
</feature>
<feature type="binding site" evidence="1">
    <location>
        <position position="887"/>
    </location>
    <ligand>
        <name>Zn(2+)</name>
        <dbReference type="ChEBI" id="CHEBI:29105"/>
    </ligand>
</feature>
<feature type="binding site" evidence="1">
    <location>
        <position position="896"/>
    </location>
    <ligand>
        <name>Zn(2+)</name>
        <dbReference type="ChEBI" id="CHEBI:29105"/>
    </ligand>
</feature>
<feature type="binding site" evidence="1">
    <location>
        <position position="897"/>
    </location>
    <ligand>
        <name>Zn(2+)</name>
        <dbReference type="ChEBI" id="CHEBI:29105"/>
    </ligand>
</feature>
<proteinExistence type="inferred from homology"/>
<reference key="1">
    <citation type="journal article" date="2004" name="Nature">
        <title>Genome sequence of Silicibacter pomeroyi reveals adaptations to the marine environment.</title>
        <authorList>
            <person name="Moran M.A."/>
            <person name="Buchan A."/>
            <person name="Gonzalez J.M."/>
            <person name="Heidelberg J.F."/>
            <person name="Whitman W.B."/>
            <person name="Kiene R.P."/>
            <person name="Henriksen J.R."/>
            <person name="King G.M."/>
            <person name="Belas R."/>
            <person name="Fuqua C."/>
            <person name="Brinkac L.M."/>
            <person name="Lewis M."/>
            <person name="Johri S."/>
            <person name="Weaver B."/>
            <person name="Pai G."/>
            <person name="Eisen J.A."/>
            <person name="Rahe E."/>
            <person name="Sheldon W.M."/>
            <person name="Ye W."/>
            <person name="Miller T.R."/>
            <person name="Carlton J."/>
            <person name="Rasko D.A."/>
            <person name="Paulsen I.T."/>
            <person name="Ren Q."/>
            <person name="Daugherty S.C."/>
            <person name="DeBoy R.T."/>
            <person name="Dodson R.J."/>
            <person name="Durkin A.S."/>
            <person name="Madupu R."/>
            <person name="Nelson W.C."/>
            <person name="Sullivan S.A."/>
            <person name="Rosovitz M.J."/>
            <person name="Haft D.H."/>
            <person name="Selengut J."/>
            <person name="Ward N."/>
        </authorList>
    </citation>
    <scope>NUCLEOTIDE SEQUENCE [LARGE SCALE GENOMIC DNA]</scope>
    <source>
        <strain>ATCC 700808 / DSM 15171 / DSS-3</strain>
    </source>
</reference>
<reference key="2">
    <citation type="journal article" date="2014" name="Stand. Genomic Sci.">
        <title>An updated genome annotation for the model marine bacterium Ruegeria pomeroyi DSS-3.</title>
        <authorList>
            <person name="Rivers A.R."/>
            <person name="Smith C.B."/>
            <person name="Moran M.A."/>
        </authorList>
    </citation>
    <scope>GENOME REANNOTATION</scope>
    <source>
        <strain>ATCC 700808 / DSM 15171 / DSS-3</strain>
    </source>
</reference>
<gene>
    <name evidence="1" type="primary">secA1</name>
    <name type="ordered locus">SPO0057</name>
</gene>
<protein>
    <recommendedName>
        <fullName evidence="1">Protein translocase subunit SecA 1</fullName>
        <ecNumber evidence="1">7.4.2.8</ecNumber>
    </recommendedName>
</protein>
<organism>
    <name type="scientific">Ruegeria pomeroyi (strain ATCC 700808 / DSM 15171 / DSS-3)</name>
    <name type="common">Silicibacter pomeroyi</name>
    <dbReference type="NCBI Taxonomy" id="246200"/>
    <lineage>
        <taxon>Bacteria</taxon>
        <taxon>Pseudomonadati</taxon>
        <taxon>Pseudomonadota</taxon>
        <taxon>Alphaproteobacteria</taxon>
        <taxon>Rhodobacterales</taxon>
        <taxon>Roseobacteraceae</taxon>
        <taxon>Ruegeria</taxon>
    </lineage>
</organism>
<accession>Q5LWK0</accession>
<comment type="function">
    <text evidence="1">Part of the Sec protein translocase complex. Interacts with the SecYEG preprotein conducting channel. Has a central role in coupling the hydrolysis of ATP to the transfer of proteins into and across the cell membrane, serving both as a receptor for the preprotein-SecB complex and as an ATP-driven molecular motor driving the stepwise translocation of polypeptide chains across the membrane.</text>
</comment>
<comment type="catalytic activity">
    <reaction evidence="1">
        <text>ATP + H2O + cellular proteinSide 1 = ADP + phosphate + cellular proteinSide 2.</text>
        <dbReference type="EC" id="7.4.2.8"/>
    </reaction>
</comment>
<comment type="cofactor">
    <cofactor evidence="1">
        <name>Zn(2+)</name>
        <dbReference type="ChEBI" id="CHEBI:29105"/>
    </cofactor>
    <text evidence="1">May bind 1 zinc ion per subunit.</text>
</comment>
<comment type="subunit">
    <text evidence="1">Monomer and homodimer. Part of the essential Sec protein translocation apparatus which comprises SecA, SecYEG and auxiliary proteins SecDF-YajC and YidC.</text>
</comment>
<comment type="subcellular location">
    <subcellularLocation>
        <location evidence="1">Cell inner membrane</location>
        <topology evidence="1">Peripheral membrane protein</topology>
        <orientation evidence="1">Cytoplasmic side</orientation>
    </subcellularLocation>
    <subcellularLocation>
        <location evidence="1">Cytoplasm</location>
    </subcellularLocation>
    <text evidence="1">Distribution is 50-50.</text>
</comment>
<comment type="similarity">
    <text evidence="1">Belongs to the SecA family.</text>
</comment>
<evidence type="ECO:0000255" key="1">
    <source>
        <dbReference type="HAMAP-Rule" id="MF_01382"/>
    </source>
</evidence>
<evidence type="ECO:0000256" key="2">
    <source>
        <dbReference type="SAM" id="MobiDB-lite"/>
    </source>
</evidence>
<name>SECA1_RUEPO</name>
<dbReference type="EC" id="7.4.2.8" evidence="1"/>
<dbReference type="EMBL" id="CP000031">
    <property type="protein sequence ID" value="AAV93388.1"/>
    <property type="molecule type" value="Genomic_DNA"/>
</dbReference>
<dbReference type="RefSeq" id="WP_011045830.1">
    <property type="nucleotide sequence ID" value="NC_003911.12"/>
</dbReference>
<dbReference type="SMR" id="Q5LWK0"/>
<dbReference type="STRING" id="246200.SPO0057"/>
<dbReference type="PaxDb" id="246200-SPO0057"/>
<dbReference type="KEGG" id="sil:SPO0057"/>
<dbReference type="eggNOG" id="COG0653">
    <property type="taxonomic scope" value="Bacteria"/>
</dbReference>
<dbReference type="HOGENOM" id="CLU_005314_3_0_5"/>
<dbReference type="OrthoDB" id="9805579at2"/>
<dbReference type="Proteomes" id="UP000001023">
    <property type="component" value="Chromosome"/>
</dbReference>
<dbReference type="GO" id="GO:0031522">
    <property type="term" value="C:cell envelope Sec protein transport complex"/>
    <property type="evidence" value="ECO:0007669"/>
    <property type="project" value="TreeGrafter"/>
</dbReference>
<dbReference type="GO" id="GO:0005829">
    <property type="term" value="C:cytosol"/>
    <property type="evidence" value="ECO:0007669"/>
    <property type="project" value="TreeGrafter"/>
</dbReference>
<dbReference type="GO" id="GO:0005886">
    <property type="term" value="C:plasma membrane"/>
    <property type="evidence" value="ECO:0007669"/>
    <property type="project" value="UniProtKB-SubCell"/>
</dbReference>
<dbReference type="GO" id="GO:0005524">
    <property type="term" value="F:ATP binding"/>
    <property type="evidence" value="ECO:0007669"/>
    <property type="project" value="UniProtKB-UniRule"/>
</dbReference>
<dbReference type="GO" id="GO:0046872">
    <property type="term" value="F:metal ion binding"/>
    <property type="evidence" value="ECO:0007669"/>
    <property type="project" value="UniProtKB-KW"/>
</dbReference>
<dbReference type="GO" id="GO:0008564">
    <property type="term" value="F:protein-exporting ATPase activity"/>
    <property type="evidence" value="ECO:0007669"/>
    <property type="project" value="UniProtKB-EC"/>
</dbReference>
<dbReference type="GO" id="GO:0065002">
    <property type="term" value="P:intracellular protein transmembrane transport"/>
    <property type="evidence" value="ECO:0007669"/>
    <property type="project" value="UniProtKB-UniRule"/>
</dbReference>
<dbReference type="GO" id="GO:0017038">
    <property type="term" value="P:protein import"/>
    <property type="evidence" value="ECO:0007669"/>
    <property type="project" value="InterPro"/>
</dbReference>
<dbReference type="GO" id="GO:0006605">
    <property type="term" value="P:protein targeting"/>
    <property type="evidence" value="ECO:0007669"/>
    <property type="project" value="UniProtKB-UniRule"/>
</dbReference>
<dbReference type="GO" id="GO:0043952">
    <property type="term" value="P:protein transport by the Sec complex"/>
    <property type="evidence" value="ECO:0007669"/>
    <property type="project" value="TreeGrafter"/>
</dbReference>
<dbReference type="CDD" id="cd17928">
    <property type="entry name" value="DEXDc_SecA"/>
    <property type="match status" value="1"/>
</dbReference>
<dbReference type="CDD" id="cd18803">
    <property type="entry name" value="SF2_C_secA"/>
    <property type="match status" value="1"/>
</dbReference>
<dbReference type="FunFam" id="3.40.50.300:FF:000113">
    <property type="entry name" value="Preprotein translocase subunit SecA"/>
    <property type="match status" value="1"/>
</dbReference>
<dbReference type="FunFam" id="3.90.1440.10:FF:000001">
    <property type="entry name" value="Preprotein translocase subunit SecA"/>
    <property type="match status" value="1"/>
</dbReference>
<dbReference type="FunFam" id="1.10.3060.10:FF:000003">
    <property type="entry name" value="Protein translocase subunit SecA"/>
    <property type="match status" value="1"/>
</dbReference>
<dbReference type="Gene3D" id="1.10.3060.10">
    <property type="entry name" value="Helical scaffold and wing domains of SecA"/>
    <property type="match status" value="1"/>
</dbReference>
<dbReference type="Gene3D" id="3.40.50.300">
    <property type="entry name" value="P-loop containing nucleotide triphosphate hydrolases"/>
    <property type="match status" value="2"/>
</dbReference>
<dbReference type="Gene3D" id="3.90.1440.10">
    <property type="entry name" value="SecA, preprotein cross-linking domain"/>
    <property type="match status" value="1"/>
</dbReference>
<dbReference type="HAMAP" id="MF_01382">
    <property type="entry name" value="SecA"/>
    <property type="match status" value="1"/>
</dbReference>
<dbReference type="InterPro" id="IPR014001">
    <property type="entry name" value="Helicase_ATP-bd"/>
</dbReference>
<dbReference type="InterPro" id="IPR001650">
    <property type="entry name" value="Helicase_C-like"/>
</dbReference>
<dbReference type="InterPro" id="IPR027417">
    <property type="entry name" value="P-loop_NTPase"/>
</dbReference>
<dbReference type="InterPro" id="IPR004027">
    <property type="entry name" value="SEC_C_motif"/>
</dbReference>
<dbReference type="InterPro" id="IPR000185">
    <property type="entry name" value="SecA"/>
</dbReference>
<dbReference type="InterPro" id="IPR020937">
    <property type="entry name" value="SecA_CS"/>
</dbReference>
<dbReference type="InterPro" id="IPR011115">
    <property type="entry name" value="SecA_DEAD"/>
</dbReference>
<dbReference type="InterPro" id="IPR014018">
    <property type="entry name" value="SecA_motor_DEAD"/>
</dbReference>
<dbReference type="InterPro" id="IPR011130">
    <property type="entry name" value="SecA_preprotein_X-link_dom"/>
</dbReference>
<dbReference type="InterPro" id="IPR044722">
    <property type="entry name" value="SecA_SF2_C"/>
</dbReference>
<dbReference type="InterPro" id="IPR011116">
    <property type="entry name" value="SecA_Wing/Scaffold"/>
</dbReference>
<dbReference type="InterPro" id="IPR036266">
    <property type="entry name" value="SecA_Wing/Scaffold_sf"/>
</dbReference>
<dbReference type="InterPro" id="IPR036670">
    <property type="entry name" value="SecA_X-link_sf"/>
</dbReference>
<dbReference type="NCBIfam" id="NF009538">
    <property type="entry name" value="PRK12904.1"/>
    <property type="match status" value="1"/>
</dbReference>
<dbReference type="NCBIfam" id="TIGR00963">
    <property type="entry name" value="secA"/>
    <property type="match status" value="1"/>
</dbReference>
<dbReference type="PANTHER" id="PTHR30612:SF0">
    <property type="entry name" value="CHLOROPLAST PROTEIN-TRANSPORTING ATPASE"/>
    <property type="match status" value="1"/>
</dbReference>
<dbReference type="PANTHER" id="PTHR30612">
    <property type="entry name" value="SECA INNER MEMBRANE COMPONENT OF SEC PROTEIN SECRETION SYSTEM"/>
    <property type="match status" value="1"/>
</dbReference>
<dbReference type="Pfam" id="PF21090">
    <property type="entry name" value="P-loop_SecA"/>
    <property type="match status" value="1"/>
</dbReference>
<dbReference type="Pfam" id="PF02810">
    <property type="entry name" value="SEC-C"/>
    <property type="match status" value="1"/>
</dbReference>
<dbReference type="Pfam" id="PF07517">
    <property type="entry name" value="SecA_DEAD"/>
    <property type="match status" value="1"/>
</dbReference>
<dbReference type="Pfam" id="PF01043">
    <property type="entry name" value="SecA_PP_bind"/>
    <property type="match status" value="1"/>
</dbReference>
<dbReference type="Pfam" id="PF07516">
    <property type="entry name" value="SecA_SW"/>
    <property type="match status" value="1"/>
</dbReference>
<dbReference type="PRINTS" id="PR00906">
    <property type="entry name" value="SECA"/>
</dbReference>
<dbReference type="SMART" id="SM00957">
    <property type="entry name" value="SecA_DEAD"/>
    <property type="match status" value="1"/>
</dbReference>
<dbReference type="SMART" id="SM00958">
    <property type="entry name" value="SecA_PP_bind"/>
    <property type="match status" value="1"/>
</dbReference>
<dbReference type="SUPFAM" id="SSF81886">
    <property type="entry name" value="Helical scaffold and wing domains of SecA"/>
    <property type="match status" value="1"/>
</dbReference>
<dbReference type="SUPFAM" id="SSF52540">
    <property type="entry name" value="P-loop containing nucleoside triphosphate hydrolases"/>
    <property type="match status" value="2"/>
</dbReference>
<dbReference type="SUPFAM" id="SSF81767">
    <property type="entry name" value="Pre-protein crosslinking domain of SecA"/>
    <property type="match status" value="1"/>
</dbReference>
<dbReference type="PROSITE" id="PS01312">
    <property type="entry name" value="SECA"/>
    <property type="match status" value="1"/>
</dbReference>
<dbReference type="PROSITE" id="PS51196">
    <property type="entry name" value="SECA_MOTOR_DEAD"/>
    <property type="match status" value="1"/>
</dbReference>
<keyword id="KW-0067">ATP-binding</keyword>
<keyword id="KW-0997">Cell inner membrane</keyword>
<keyword id="KW-1003">Cell membrane</keyword>
<keyword id="KW-0963">Cytoplasm</keyword>
<keyword id="KW-0472">Membrane</keyword>
<keyword id="KW-0479">Metal-binding</keyword>
<keyword id="KW-0547">Nucleotide-binding</keyword>
<keyword id="KW-0653">Protein transport</keyword>
<keyword id="KW-1185">Reference proteome</keyword>
<keyword id="KW-1278">Translocase</keyword>
<keyword id="KW-0811">Translocation</keyword>
<keyword id="KW-0813">Transport</keyword>
<keyword id="KW-0862">Zinc</keyword>
<sequence>MLGLGTLAKKVFGTPNDRKIKATRPVVAQINALEEEFAKLTDEGLKQKTDELRKRALDGESLDALLPEAFANCREAGKRALGLRAFDTQLMGGIFLHQGNISEMKTGEGKTLVATFPAYLNALTGKGVHVVTVNEYLAKRDSEWMGKVFAALGMTTGVIWSGQPDAEKMAAYESDITYATNNELGFDYLRDNMKGELSEVYQKQHNFAIVDEVDSILIDEARTPLIISGPAQDRSDLYVAIDALLPALSDDHFELDEKTRNVTFTDEGNEFLEAQLVARGLLPEGQSLYDPESTTIVHHVNQGLRAHKLFQRDKDYIVRDGEVVLIDEFTGRMMPGRRLSDGLHQAIEAKENAQIQPENVTLASVTFQNYFRLYDKLSGMTGTALTEAEEFAEIYGLGVVEVPTNRPIARTDEDDQVYRTAAEKYGAMIDETKKAHEKGQPVLLGTTSIEKSEMLSQMLTKEGIEHNVLNARQHEREAQIVAEAGRYGAVTIATNMAGRGTDIQLGGNVEMKVLEALAENPEADPVELRAAEEARHAEEKQKVLDAGGLYVMASERHESRRIDNQLRGRSGRQGDPGRTVFYLSLEDDLMRIFGSERLDKVLTTLGMKEGEAIIHPWVNKSLERAQAKVEGRNFDMRKNVLKFDDVMNDQRKVIFNQRREIMATEDLSDVVADMREQVIDDLIDEYMPPKTYADQWDTQGLYAAVIEKLGIDVPVIEWAAEEGVDDDEIRERLIKASGDYMESKAADFGAENMRNIEKQVLLQTIDSKWREHLLKLEHLRSVVGFRGYAQRDPLNEYKTESFQLFEGLLDSLRETVTQQLSRVRMLSEEEQRQMMAQMMAQQNQAEQAAVQAEAVAEAKASGDARPGFVEDDPSTWGNPARNDLCPCGSGKKFKHCHGRLA</sequence>